<reference key="1">
    <citation type="journal article" date="2002" name="Nat. Genet.">
        <title>Genome sequence of the endocellular obligate symbiont of tsetse flies, Wigglesworthia glossinidia.</title>
        <authorList>
            <person name="Akman L."/>
            <person name="Yamashita A."/>
            <person name="Watanabe H."/>
            <person name="Oshima K."/>
            <person name="Shiba T."/>
            <person name="Hattori M."/>
            <person name="Aksoy S."/>
        </authorList>
    </citation>
    <scope>NUCLEOTIDE SEQUENCE [LARGE SCALE GENOMIC DNA]</scope>
</reference>
<organism>
    <name type="scientific">Wigglesworthia glossinidia brevipalpis</name>
    <dbReference type="NCBI Taxonomy" id="36870"/>
    <lineage>
        <taxon>Bacteria</taxon>
        <taxon>Pseudomonadati</taxon>
        <taxon>Pseudomonadota</taxon>
        <taxon>Gammaproteobacteria</taxon>
        <taxon>Enterobacterales</taxon>
        <taxon>Erwiniaceae</taxon>
        <taxon>Wigglesworthia</taxon>
    </lineage>
</organism>
<name>RS18_WIGBR</name>
<accession>Q8D2U3</accession>
<protein>
    <recommendedName>
        <fullName evidence="1">Small ribosomal subunit protein bS18</fullName>
    </recommendedName>
    <alternativeName>
        <fullName evidence="2">30S ribosomal protein S18</fullName>
    </alternativeName>
</protein>
<evidence type="ECO:0000255" key="1">
    <source>
        <dbReference type="HAMAP-Rule" id="MF_00270"/>
    </source>
</evidence>
<evidence type="ECO:0000305" key="2"/>
<comment type="function">
    <text evidence="1">Binds as a heterodimer with protein bS6 to the central domain of the 16S rRNA, where it helps stabilize the platform of the 30S subunit.</text>
</comment>
<comment type="subunit">
    <text evidence="1">Part of the 30S ribosomal subunit. Forms a tight heterodimer with protein bS6.</text>
</comment>
<comment type="similarity">
    <text evidence="1">Belongs to the bacterial ribosomal protein bS18 family.</text>
</comment>
<dbReference type="EMBL" id="BA000021">
    <property type="protein sequence ID" value="BAC24407.1"/>
    <property type="molecule type" value="Genomic_DNA"/>
</dbReference>
<dbReference type="SMR" id="Q8D2U3"/>
<dbReference type="STRING" id="36870.gene:10368754"/>
<dbReference type="KEGG" id="wbr:rpsR"/>
<dbReference type="eggNOG" id="COG0238">
    <property type="taxonomic scope" value="Bacteria"/>
</dbReference>
<dbReference type="HOGENOM" id="CLU_148710_2_2_6"/>
<dbReference type="OrthoDB" id="9812008at2"/>
<dbReference type="Proteomes" id="UP000000562">
    <property type="component" value="Chromosome"/>
</dbReference>
<dbReference type="GO" id="GO:0022627">
    <property type="term" value="C:cytosolic small ribosomal subunit"/>
    <property type="evidence" value="ECO:0007669"/>
    <property type="project" value="TreeGrafter"/>
</dbReference>
<dbReference type="GO" id="GO:0070181">
    <property type="term" value="F:small ribosomal subunit rRNA binding"/>
    <property type="evidence" value="ECO:0007669"/>
    <property type="project" value="TreeGrafter"/>
</dbReference>
<dbReference type="GO" id="GO:0003735">
    <property type="term" value="F:structural constituent of ribosome"/>
    <property type="evidence" value="ECO:0007669"/>
    <property type="project" value="InterPro"/>
</dbReference>
<dbReference type="GO" id="GO:0006412">
    <property type="term" value="P:translation"/>
    <property type="evidence" value="ECO:0007669"/>
    <property type="project" value="UniProtKB-UniRule"/>
</dbReference>
<dbReference type="FunFam" id="4.10.640.10:FF:000001">
    <property type="entry name" value="30S ribosomal protein S18"/>
    <property type="match status" value="1"/>
</dbReference>
<dbReference type="Gene3D" id="4.10.640.10">
    <property type="entry name" value="Ribosomal protein S18"/>
    <property type="match status" value="1"/>
</dbReference>
<dbReference type="HAMAP" id="MF_00270">
    <property type="entry name" value="Ribosomal_bS18"/>
    <property type="match status" value="1"/>
</dbReference>
<dbReference type="InterPro" id="IPR001648">
    <property type="entry name" value="Ribosomal_bS18"/>
</dbReference>
<dbReference type="InterPro" id="IPR018275">
    <property type="entry name" value="Ribosomal_bS18_CS"/>
</dbReference>
<dbReference type="InterPro" id="IPR036870">
    <property type="entry name" value="Ribosomal_bS18_sf"/>
</dbReference>
<dbReference type="NCBIfam" id="TIGR00165">
    <property type="entry name" value="S18"/>
    <property type="match status" value="1"/>
</dbReference>
<dbReference type="PANTHER" id="PTHR13479">
    <property type="entry name" value="30S RIBOSOMAL PROTEIN S18"/>
    <property type="match status" value="1"/>
</dbReference>
<dbReference type="PANTHER" id="PTHR13479:SF40">
    <property type="entry name" value="SMALL RIBOSOMAL SUBUNIT PROTEIN BS18M"/>
    <property type="match status" value="1"/>
</dbReference>
<dbReference type="Pfam" id="PF01084">
    <property type="entry name" value="Ribosomal_S18"/>
    <property type="match status" value="1"/>
</dbReference>
<dbReference type="PRINTS" id="PR00974">
    <property type="entry name" value="RIBOSOMALS18"/>
</dbReference>
<dbReference type="SUPFAM" id="SSF46911">
    <property type="entry name" value="Ribosomal protein S18"/>
    <property type="match status" value="1"/>
</dbReference>
<dbReference type="PROSITE" id="PS00057">
    <property type="entry name" value="RIBOSOMAL_S18"/>
    <property type="match status" value="1"/>
</dbReference>
<feature type="chain" id="PRO_0000111262" description="Small ribosomal subunit protein bS18">
    <location>
        <begin position="1"/>
        <end position="75"/>
    </location>
</feature>
<keyword id="KW-1185">Reference proteome</keyword>
<keyword id="KW-0687">Ribonucleoprotein</keyword>
<keyword id="KW-0689">Ribosomal protein</keyword>
<keyword id="KW-0694">RNA-binding</keyword>
<keyword id="KW-0699">rRNA-binding</keyword>
<proteinExistence type="inferred from homology"/>
<sequence length="75" mass="9198">MIRNFRRRKFCRFTLEKINNIDYKDIILLKNYITENGKIVPSRITGTRARYQRQLSRAVKRARYLSLLPYTDHHR</sequence>
<gene>
    <name evidence="1" type="primary">rpsR</name>
    <name type="ordered locus">WIGBR2610</name>
</gene>